<sequence length="200" mass="21841">MRTSHMLEHLMEALRCLPGVGPKSAQRMAFHLLQRDRKGGLQLAEALSQAMVEIGHCQECRTFTEQDVCHICSNPKRKENGQLCVVESPADIAALEATGQFSGRYFVLMGHLSPLDGIGPSDIGLDTLDYRLQRGDISEVILATNPTVEGEATAQYIAELCREHQVTASRIAHGVPVGGELELVDGTTLSHSLLGRHKLF</sequence>
<accession>Q9KT49</accession>
<organism>
    <name type="scientific">Vibrio cholerae serotype O1 (strain ATCC 39315 / El Tor Inaba N16961)</name>
    <dbReference type="NCBI Taxonomy" id="243277"/>
    <lineage>
        <taxon>Bacteria</taxon>
        <taxon>Pseudomonadati</taxon>
        <taxon>Pseudomonadota</taxon>
        <taxon>Gammaproteobacteria</taxon>
        <taxon>Vibrionales</taxon>
        <taxon>Vibrionaceae</taxon>
        <taxon>Vibrio</taxon>
    </lineage>
</organism>
<keyword id="KW-0227">DNA damage</keyword>
<keyword id="KW-0233">DNA recombination</keyword>
<keyword id="KW-0234">DNA repair</keyword>
<keyword id="KW-0479">Metal-binding</keyword>
<keyword id="KW-1185">Reference proteome</keyword>
<keyword id="KW-0862">Zinc</keyword>
<keyword id="KW-0863">Zinc-finger</keyword>
<evidence type="ECO:0000255" key="1">
    <source>
        <dbReference type="HAMAP-Rule" id="MF_00017"/>
    </source>
</evidence>
<reference key="1">
    <citation type="journal article" date="2000" name="Nature">
        <title>DNA sequence of both chromosomes of the cholera pathogen Vibrio cholerae.</title>
        <authorList>
            <person name="Heidelberg J.F."/>
            <person name="Eisen J.A."/>
            <person name="Nelson W.C."/>
            <person name="Clayton R.A."/>
            <person name="Gwinn M.L."/>
            <person name="Dodson R.J."/>
            <person name="Haft D.H."/>
            <person name="Hickey E.K."/>
            <person name="Peterson J.D."/>
            <person name="Umayam L.A."/>
            <person name="Gill S.R."/>
            <person name="Nelson K.E."/>
            <person name="Read T.D."/>
            <person name="Tettelin H."/>
            <person name="Richardson D.L."/>
            <person name="Ermolaeva M.D."/>
            <person name="Vamathevan J.J."/>
            <person name="Bass S."/>
            <person name="Qin H."/>
            <person name="Dragoi I."/>
            <person name="Sellers P."/>
            <person name="McDonald L.A."/>
            <person name="Utterback T.R."/>
            <person name="Fleischmann R.D."/>
            <person name="Nierman W.C."/>
            <person name="White O."/>
            <person name="Salzberg S.L."/>
            <person name="Smith H.O."/>
            <person name="Colwell R.R."/>
            <person name="Mekalanos J.J."/>
            <person name="Venter J.C."/>
            <person name="Fraser C.M."/>
        </authorList>
    </citation>
    <scope>NUCLEOTIDE SEQUENCE [LARGE SCALE GENOMIC DNA]</scope>
    <source>
        <strain>ATCC 39315 / El Tor Inaba N16961</strain>
    </source>
</reference>
<dbReference type="EMBL" id="AE003852">
    <property type="protein sequence ID" value="AAF94215.1"/>
    <property type="molecule type" value="Genomic_DNA"/>
</dbReference>
<dbReference type="PIR" id="B82247">
    <property type="entry name" value="B82247"/>
</dbReference>
<dbReference type="RefSeq" id="NP_230701.1">
    <property type="nucleotide sequence ID" value="NC_002505.1"/>
</dbReference>
<dbReference type="RefSeq" id="WP_001260579.1">
    <property type="nucleotide sequence ID" value="NZ_LT906614.1"/>
</dbReference>
<dbReference type="SMR" id="Q9KT49"/>
<dbReference type="STRING" id="243277.VC_1056"/>
<dbReference type="DNASU" id="2614326"/>
<dbReference type="EnsemblBacteria" id="AAF94215">
    <property type="protein sequence ID" value="AAF94215"/>
    <property type="gene ID" value="VC_1056"/>
</dbReference>
<dbReference type="GeneID" id="69720250"/>
<dbReference type="KEGG" id="vch:VC_1056"/>
<dbReference type="PATRIC" id="fig|243277.26.peg.1008"/>
<dbReference type="eggNOG" id="COG0353">
    <property type="taxonomic scope" value="Bacteria"/>
</dbReference>
<dbReference type="HOGENOM" id="CLU_060739_1_2_6"/>
<dbReference type="Proteomes" id="UP000000584">
    <property type="component" value="Chromosome 1"/>
</dbReference>
<dbReference type="GO" id="GO:0003677">
    <property type="term" value="F:DNA binding"/>
    <property type="evidence" value="ECO:0007669"/>
    <property type="project" value="UniProtKB-UniRule"/>
</dbReference>
<dbReference type="GO" id="GO:0008270">
    <property type="term" value="F:zinc ion binding"/>
    <property type="evidence" value="ECO:0007669"/>
    <property type="project" value="UniProtKB-KW"/>
</dbReference>
<dbReference type="GO" id="GO:0006302">
    <property type="term" value="P:double-strand break repair"/>
    <property type="evidence" value="ECO:0000318"/>
    <property type="project" value="GO_Central"/>
</dbReference>
<dbReference type="GO" id="GO:0000725">
    <property type="term" value="P:recombinational repair"/>
    <property type="evidence" value="ECO:0000318"/>
    <property type="project" value="GO_Central"/>
</dbReference>
<dbReference type="CDD" id="cd01025">
    <property type="entry name" value="TOPRIM_recR"/>
    <property type="match status" value="1"/>
</dbReference>
<dbReference type="FunFam" id="1.10.8.420:FF:000001">
    <property type="entry name" value="Recombination protein RecR"/>
    <property type="match status" value="1"/>
</dbReference>
<dbReference type="FunFam" id="3.40.1360.10:FF:000001">
    <property type="entry name" value="Recombination protein RecR"/>
    <property type="match status" value="1"/>
</dbReference>
<dbReference type="Gene3D" id="3.30.60.80">
    <property type="match status" value="1"/>
</dbReference>
<dbReference type="Gene3D" id="3.40.1360.10">
    <property type="match status" value="1"/>
</dbReference>
<dbReference type="Gene3D" id="6.10.250.240">
    <property type="match status" value="1"/>
</dbReference>
<dbReference type="Gene3D" id="1.10.8.420">
    <property type="entry name" value="RecR Domain 1"/>
    <property type="match status" value="1"/>
</dbReference>
<dbReference type="HAMAP" id="MF_00017">
    <property type="entry name" value="RecR"/>
    <property type="match status" value="1"/>
</dbReference>
<dbReference type="InterPro" id="IPR000093">
    <property type="entry name" value="DNA_Rcmb_RecR"/>
</dbReference>
<dbReference type="InterPro" id="IPR023627">
    <property type="entry name" value="Rcmb_RecR"/>
</dbReference>
<dbReference type="InterPro" id="IPR015967">
    <property type="entry name" value="Rcmb_RecR_Znf"/>
</dbReference>
<dbReference type="InterPro" id="IPR006171">
    <property type="entry name" value="TOPRIM_dom"/>
</dbReference>
<dbReference type="InterPro" id="IPR034137">
    <property type="entry name" value="TOPRIM_RecR"/>
</dbReference>
<dbReference type="NCBIfam" id="TIGR00615">
    <property type="entry name" value="recR"/>
    <property type="match status" value="1"/>
</dbReference>
<dbReference type="PANTHER" id="PTHR30446">
    <property type="entry name" value="RECOMBINATION PROTEIN RECR"/>
    <property type="match status" value="1"/>
</dbReference>
<dbReference type="PANTHER" id="PTHR30446:SF0">
    <property type="entry name" value="RECOMBINATION PROTEIN RECR"/>
    <property type="match status" value="1"/>
</dbReference>
<dbReference type="Pfam" id="PF21175">
    <property type="entry name" value="RecR_C"/>
    <property type="match status" value="1"/>
</dbReference>
<dbReference type="Pfam" id="PF21176">
    <property type="entry name" value="RecR_HhH"/>
    <property type="match status" value="1"/>
</dbReference>
<dbReference type="Pfam" id="PF02132">
    <property type="entry name" value="RecR_ZnF"/>
    <property type="match status" value="1"/>
</dbReference>
<dbReference type="Pfam" id="PF13662">
    <property type="entry name" value="Toprim_4"/>
    <property type="match status" value="1"/>
</dbReference>
<dbReference type="SMART" id="SM00493">
    <property type="entry name" value="TOPRIM"/>
    <property type="match status" value="1"/>
</dbReference>
<dbReference type="SUPFAM" id="SSF111304">
    <property type="entry name" value="Recombination protein RecR"/>
    <property type="match status" value="1"/>
</dbReference>
<dbReference type="PROSITE" id="PS50880">
    <property type="entry name" value="TOPRIM"/>
    <property type="match status" value="1"/>
</dbReference>
<feature type="chain" id="PRO_0000190420" description="Recombination protein RecR">
    <location>
        <begin position="1"/>
        <end position="200"/>
    </location>
</feature>
<feature type="domain" description="Toprim" evidence="1">
    <location>
        <begin position="81"/>
        <end position="176"/>
    </location>
</feature>
<feature type="zinc finger region" description="C4-type" evidence="1">
    <location>
        <begin position="57"/>
        <end position="72"/>
    </location>
</feature>
<proteinExistence type="inferred from homology"/>
<comment type="function">
    <text evidence="1">May play a role in DNA repair. It seems to be involved in an RecBC-independent recombinational process of DNA repair. It may act with RecF and RecO.</text>
</comment>
<comment type="similarity">
    <text evidence="1">Belongs to the RecR family.</text>
</comment>
<gene>
    <name evidence="1" type="primary">recR</name>
    <name type="ordered locus">VC_1056</name>
</gene>
<protein>
    <recommendedName>
        <fullName evidence="1">Recombination protein RecR</fullName>
    </recommendedName>
</protein>
<name>RECR_VIBCH</name>